<feature type="chain" id="PRO_1000023405" description="Translational regulator CsrA">
    <location>
        <begin position="1"/>
        <end position="61"/>
    </location>
</feature>
<organism>
    <name type="scientific">Pseudomonas aeruginosa (strain UCBPP-PA14)</name>
    <dbReference type="NCBI Taxonomy" id="208963"/>
    <lineage>
        <taxon>Bacteria</taxon>
        <taxon>Pseudomonadati</taxon>
        <taxon>Pseudomonadota</taxon>
        <taxon>Gammaproteobacteria</taxon>
        <taxon>Pseudomonadales</taxon>
        <taxon>Pseudomonadaceae</taxon>
        <taxon>Pseudomonas</taxon>
    </lineage>
</organism>
<reference key="1">
    <citation type="journal article" date="2006" name="Genome Biol.">
        <title>Genomic analysis reveals that Pseudomonas aeruginosa virulence is combinatorial.</title>
        <authorList>
            <person name="Lee D.G."/>
            <person name="Urbach J.M."/>
            <person name="Wu G."/>
            <person name="Liberati N.T."/>
            <person name="Feinbaum R.L."/>
            <person name="Miyata S."/>
            <person name="Diggins L.T."/>
            <person name="He J."/>
            <person name="Saucier M."/>
            <person name="Deziel E."/>
            <person name="Friedman L."/>
            <person name="Li L."/>
            <person name="Grills G."/>
            <person name="Montgomery K."/>
            <person name="Kucherlapati R."/>
            <person name="Rahme L.G."/>
            <person name="Ausubel F.M."/>
        </authorList>
    </citation>
    <scope>NUCLEOTIDE SEQUENCE [LARGE SCALE GENOMIC DNA]</scope>
    <source>
        <strain>UCBPP-PA14</strain>
    </source>
</reference>
<evidence type="ECO:0000255" key="1">
    <source>
        <dbReference type="HAMAP-Rule" id="MF_00167"/>
    </source>
</evidence>
<dbReference type="EMBL" id="CP000438">
    <property type="protein sequence ID" value="ABJ10065.1"/>
    <property type="molecule type" value="Genomic_DNA"/>
</dbReference>
<dbReference type="RefSeq" id="WP_003085981.1">
    <property type="nucleotide sequence ID" value="NZ_CP034244.1"/>
</dbReference>
<dbReference type="SMR" id="Q02I65"/>
<dbReference type="GeneID" id="79915115"/>
<dbReference type="KEGG" id="pau:PA14_52570"/>
<dbReference type="PseudoCAP" id="PA14_52570"/>
<dbReference type="HOGENOM" id="CLU_164837_2_1_6"/>
<dbReference type="BioCyc" id="PAER208963:G1G74-4425-MONOMER"/>
<dbReference type="Proteomes" id="UP000000653">
    <property type="component" value="Chromosome"/>
</dbReference>
<dbReference type="GO" id="GO:0005829">
    <property type="term" value="C:cytosol"/>
    <property type="evidence" value="ECO:0007669"/>
    <property type="project" value="TreeGrafter"/>
</dbReference>
<dbReference type="GO" id="GO:0048027">
    <property type="term" value="F:mRNA 5'-UTR binding"/>
    <property type="evidence" value="ECO:0007669"/>
    <property type="project" value="UniProtKB-UniRule"/>
</dbReference>
<dbReference type="GO" id="GO:0006402">
    <property type="term" value="P:mRNA catabolic process"/>
    <property type="evidence" value="ECO:0007669"/>
    <property type="project" value="InterPro"/>
</dbReference>
<dbReference type="GO" id="GO:0045947">
    <property type="term" value="P:negative regulation of translational initiation"/>
    <property type="evidence" value="ECO:0007669"/>
    <property type="project" value="UniProtKB-UniRule"/>
</dbReference>
<dbReference type="GO" id="GO:0045948">
    <property type="term" value="P:positive regulation of translational initiation"/>
    <property type="evidence" value="ECO:0007669"/>
    <property type="project" value="UniProtKB-UniRule"/>
</dbReference>
<dbReference type="GO" id="GO:0006109">
    <property type="term" value="P:regulation of carbohydrate metabolic process"/>
    <property type="evidence" value="ECO:0007669"/>
    <property type="project" value="UniProtKB-UniRule"/>
</dbReference>
<dbReference type="FunFam" id="2.60.40.4380:FF:000001">
    <property type="entry name" value="Translational regulator CsrA"/>
    <property type="match status" value="1"/>
</dbReference>
<dbReference type="Gene3D" id="2.60.40.4380">
    <property type="entry name" value="Translational regulator CsrA"/>
    <property type="match status" value="1"/>
</dbReference>
<dbReference type="HAMAP" id="MF_00167">
    <property type="entry name" value="CsrA"/>
    <property type="match status" value="1"/>
</dbReference>
<dbReference type="InterPro" id="IPR003751">
    <property type="entry name" value="CsrA"/>
</dbReference>
<dbReference type="InterPro" id="IPR036107">
    <property type="entry name" value="CsrA_sf"/>
</dbReference>
<dbReference type="NCBIfam" id="TIGR00202">
    <property type="entry name" value="csrA"/>
    <property type="match status" value="1"/>
</dbReference>
<dbReference type="NCBIfam" id="NF002469">
    <property type="entry name" value="PRK01712.1"/>
    <property type="match status" value="1"/>
</dbReference>
<dbReference type="PANTHER" id="PTHR34984">
    <property type="entry name" value="CARBON STORAGE REGULATOR"/>
    <property type="match status" value="1"/>
</dbReference>
<dbReference type="PANTHER" id="PTHR34984:SF1">
    <property type="entry name" value="CARBON STORAGE REGULATOR"/>
    <property type="match status" value="1"/>
</dbReference>
<dbReference type="Pfam" id="PF02599">
    <property type="entry name" value="CsrA"/>
    <property type="match status" value="1"/>
</dbReference>
<dbReference type="SUPFAM" id="SSF117130">
    <property type="entry name" value="CsrA-like"/>
    <property type="match status" value="1"/>
</dbReference>
<accession>Q02I65</accession>
<protein>
    <recommendedName>
        <fullName evidence="1">Translational regulator CsrA</fullName>
    </recommendedName>
    <alternativeName>
        <fullName evidence="1">Carbon storage regulator</fullName>
    </alternativeName>
</protein>
<name>CSRA_PSEAB</name>
<keyword id="KW-0010">Activator</keyword>
<keyword id="KW-0963">Cytoplasm</keyword>
<keyword id="KW-0678">Repressor</keyword>
<keyword id="KW-0694">RNA-binding</keyword>
<keyword id="KW-0810">Translation regulation</keyword>
<proteinExistence type="inferred from homology"/>
<comment type="function">
    <text evidence="1">A key translational regulator that binds mRNA to regulate translation initiation and/or mRNA stability. Mediates global changes in gene expression, shifting from rapid growth to stress survival by linking envelope stress, the stringent response and the catabolite repression systems. Usually binds in the 5'-UTR; binding at or near the Shine-Dalgarno sequence prevents ribosome-binding, repressing translation, binding elsewhere in the 5'-UTR can activate translation and/or stabilize the mRNA. Its function is antagonized by small RNA(s).</text>
</comment>
<comment type="subunit">
    <text evidence="1">Homodimer; the beta-strands of each monomer intercalate to form a hydrophobic core, while the alpha-helices form wings that extend away from the core.</text>
</comment>
<comment type="subcellular location">
    <subcellularLocation>
        <location evidence="1">Cytoplasm</location>
    </subcellularLocation>
</comment>
<comment type="similarity">
    <text evidence="1">Belongs to the CsrA/RsmA family.</text>
</comment>
<sequence length="61" mass="6909">MLILTRRVGETLMVGDDVTVTVLGVKGNQVRIGVNAPKEVAVHREEIYQRIQKEKDQEPNH</sequence>
<gene>
    <name evidence="1" type="primary">csrA</name>
    <name type="ordered locus">PA14_52570</name>
</gene>